<proteinExistence type="inferred from homology"/>
<protein>
    <recommendedName>
        <fullName>Histone H4</fullName>
    </recommendedName>
</protein>
<name>H4_PONAB</name>
<reference key="1">
    <citation type="submission" date="2004-11" db="EMBL/GenBank/DDBJ databases">
        <authorList>
            <consortium name="The German cDNA consortium"/>
        </authorList>
    </citation>
    <scope>NUCLEOTIDE SEQUENCE [LARGE SCALE MRNA]</scope>
    <source>
        <tissue>Kidney</tissue>
    </source>
</reference>
<accession>Q5RCS7</accession>
<feature type="initiator methionine" description="Removed" evidence="2">
    <location>
        <position position="1"/>
    </location>
</feature>
<feature type="chain" id="PRO_0000307387" description="Histone H4">
    <location>
        <begin position="2"/>
        <end position="103"/>
    </location>
</feature>
<feature type="DNA-binding region" evidence="1">
    <location>
        <begin position="17"/>
        <end position="21"/>
    </location>
</feature>
<feature type="region of interest" description="Disordered" evidence="5">
    <location>
        <begin position="1"/>
        <end position="20"/>
    </location>
</feature>
<feature type="compositionally biased region" description="Gly residues" evidence="5">
    <location>
        <begin position="1"/>
        <end position="14"/>
    </location>
</feature>
<feature type="modified residue" description="N-acetylserine" evidence="2">
    <location>
        <position position="2"/>
    </location>
</feature>
<feature type="modified residue" description="Phosphoserine" evidence="3">
    <location>
        <position position="2"/>
    </location>
</feature>
<feature type="modified residue" description="Asymmetric dimethylarginine; by PRMT1; alternate" evidence="3">
    <location>
        <position position="4"/>
    </location>
</feature>
<feature type="modified residue" description="Citrulline; alternate" evidence="1">
    <location>
        <position position="4"/>
    </location>
</feature>
<feature type="modified residue" description="Omega-N-methylarginine; by PRMT1; alternate" evidence="3">
    <location>
        <position position="4"/>
    </location>
</feature>
<feature type="modified residue" description="Symmetric dimethylarginine; by PRMT5 and PRMT7; alternate" evidence="4">
    <location>
        <position position="4"/>
    </location>
</feature>
<feature type="modified residue" description="N6-(2-hydroxyisobutyryl)lysine; alternate" evidence="3">
    <location>
        <position position="6"/>
    </location>
</feature>
<feature type="modified residue" description="N6-acetyl-N6-methyllysine; alternate" evidence="3">
    <location>
        <position position="6"/>
    </location>
</feature>
<feature type="modified residue" description="N6-acetyllysine; alternate" evidence="3">
    <location>
        <position position="6"/>
    </location>
</feature>
<feature type="modified residue" description="N6-butyryllysine; alternate" evidence="3">
    <location>
        <position position="6"/>
    </location>
</feature>
<feature type="modified residue" description="N6-crotonyllysine; alternate" evidence="3">
    <location>
        <position position="6"/>
    </location>
</feature>
<feature type="modified residue" description="N6-glutaryllysine; alternate" evidence="3">
    <location>
        <position position="6"/>
    </location>
</feature>
<feature type="modified residue" description="N6-lactoyllysine; alternate" evidence="3">
    <location>
        <position position="6"/>
    </location>
</feature>
<feature type="modified residue" description="N6-(2-hydroxyisobutyryl)lysine; alternate" evidence="3">
    <location>
        <position position="9"/>
    </location>
</feature>
<feature type="modified residue" description="N6-(beta-hydroxybutyryl)lysine; alternate" evidence="4">
    <location>
        <position position="9"/>
    </location>
</feature>
<feature type="modified residue" description="N6-acetyllysine; alternate" evidence="3">
    <location>
        <position position="9"/>
    </location>
</feature>
<feature type="modified residue" description="N6-butyryllysine; alternate" evidence="3">
    <location>
        <position position="9"/>
    </location>
</feature>
<feature type="modified residue" description="N6-crotonyllysine; alternate" evidence="3">
    <location>
        <position position="9"/>
    </location>
</feature>
<feature type="modified residue" description="N6-lactoyllysine; alternate" evidence="3">
    <location>
        <position position="9"/>
    </location>
</feature>
<feature type="modified residue" description="N6-propionyllysine; alternate" evidence="3">
    <location>
        <position position="9"/>
    </location>
</feature>
<feature type="modified residue" description="N6-(2-hydroxyisobutyryl)lysine; alternate" evidence="3">
    <location>
        <position position="13"/>
    </location>
</feature>
<feature type="modified residue" description="N6-(beta-hydroxybutyryl)lysine; alternate" evidence="4">
    <location>
        <position position="13"/>
    </location>
</feature>
<feature type="modified residue" description="N6-acetyl-N6-methyllysine; alternate" evidence="3">
    <location>
        <position position="13"/>
    </location>
</feature>
<feature type="modified residue" description="N6-acetyllysine; alternate" evidence="3">
    <location>
        <position position="13"/>
    </location>
</feature>
<feature type="modified residue" description="N6-butyryllysine; alternate" evidence="3">
    <location>
        <position position="13"/>
    </location>
</feature>
<feature type="modified residue" description="N6-crotonyllysine; alternate" evidence="3">
    <location>
        <position position="13"/>
    </location>
</feature>
<feature type="modified residue" description="N6-glutaryllysine; alternate" evidence="3">
    <location>
        <position position="13"/>
    </location>
</feature>
<feature type="modified residue" description="N6-lactoyllysine; alternate" evidence="3">
    <location>
        <position position="13"/>
    </location>
</feature>
<feature type="modified residue" description="N6-methyllysine; alternate" evidence="3">
    <location>
        <position position="13"/>
    </location>
</feature>
<feature type="modified residue" description="N6-succinyllysine; alternate" evidence="3">
    <location>
        <position position="13"/>
    </location>
</feature>
<feature type="modified residue" description="N6-(2-hydroxyisobutyryl)lysine; alternate" evidence="3">
    <location>
        <position position="17"/>
    </location>
</feature>
<feature type="modified residue" description="N6-acetyllysine; alternate" evidence="2">
    <location>
        <position position="17"/>
    </location>
</feature>
<feature type="modified residue" description="N6-butyryllysine; alternate" evidence="3">
    <location>
        <position position="17"/>
    </location>
</feature>
<feature type="modified residue" description="N6-crotonyllysine; alternate" evidence="3">
    <location>
        <position position="17"/>
    </location>
</feature>
<feature type="modified residue" description="N6-lactoyllysine; alternate" evidence="3">
    <location>
        <position position="17"/>
    </location>
</feature>
<feature type="modified residue" description="N6-propionyllysine; alternate" evidence="3">
    <location>
        <position position="17"/>
    </location>
</feature>
<feature type="modified residue" description="N6,N6,N6-trimethyllysine; alternate" evidence="3">
    <location>
        <position position="21"/>
    </location>
</feature>
<feature type="modified residue" description="N6,N6-dimethyllysine; alternate" evidence="2">
    <location>
        <position position="21"/>
    </location>
</feature>
<feature type="modified residue" description="N6-methyllysine; alternate" evidence="2">
    <location>
        <position position="21"/>
    </location>
</feature>
<feature type="modified residue" description="N6-(2-hydroxyisobutyryl)lysine; alternate" evidence="3">
    <location>
        <position position="32"/>
    </location>
</feature>
<feature type="modified residue" description="N6-acetyllysine; alternate" evidence="3">
    <location>
        <position position="32"/>
    </location>
</feature>
<feature type="modified residue" description="N6-butyryllysine; alternate" evidence="3">
    <location>
        <position position="32"/>
    </location>
</feature>
<feature type="modified residue" description="N6-glutaryllysine; alternate" evidence="3">
    <location>
        <position position="32"/>
    </location>
</feature>
<feature type="modified residue" description="N6-lactoyllysine; alternate" evidence="3">
    <location>
        <position position="32"/>
    </location>
</feature>
<feature type="modified residue" description="N6-propionyllysine; alternate" evidence="3">
    <location>
        <position position="32"/>
    </location>
</feature>
<feature type="modified residue" description="N6-succinyllysine; alternate" evidence="3">
    <location>
        <position position="32"/>
    </location>
</feature>
<feature type="modified residue" description="N6-(2-hydroxyisobutyryl)lysine; alternate" evidence="3">
    <location>
        <position position="45"/>
    </location>
</feature>
<feature type="modified residue" description="N6-butyryllysine; alternate" evidence="3">
    <location>
        <position position="45"/>
    </location>
</feature>
<feature type="modified residue" description="N6-propionyllysine; alternate" evidence="3">
    <location>
        <position position="45"/>
    </location>
</feature>
<feature type="modified residue" description="Phosphoserine; by PAK2" evidence="3">
    <location>
        <position position="48"/>
    </location>
</feature>
<feature type="modified residue" description="Phosphotyrosine" evidence="3">
    <location>
        <position position="52"/>
    </location>
</feature>
<feature type="modified residue" description="N6-(2-hydroxyisobutyryl)lysine; alternate" evidence="3">
    <location>
        <position position="60"/>
    </location>
</feature>
<feature type="modified residue" description="N6-glutaryllysine; alternate" evidence="3">
    <location>
        <position position="60"/>
    </location>
</feature>
<feature type="modified residue" description="N6-(2-hydroxyisobutyryl)lysine; alternate" evidence="3">
    <location>
        <position position="78"/>
    </location>
</feature>
<feature type="modified residue" description="N6-butyryllysine; alternate" evidence="3">
    <location>
        <position position="78"/>
    </location>
</feature>
<feature type="modified residue" description="N6-glutaryllysine; alternate" evidence="3">
    <location>
        <position position="78"/>
    </location>
</feature>
<feature type="modified residue" description="N6-lactoyllysine; alternate" evidence="3">
    <location>
        <position position="78"/>
    </location>
</feature>
<feature type="modified residue" description="N6-propionyllysine; alternate" evidence="3">
    <location>
        <position position="78"/>
    </location>
</feature>
<feature type="modified residue" description="N6-succinyllysine; alternate" evidence="3">
    <location>
        <position position="78"/>
    </location>
</feature>
<feature type="modified residue" description="N6-(2-hydroxyisobutyryl)lysine; alternate" evidence="3">
    <location>
        <position position="80"/>
    </location>
</feature>
<feature type="modified residue" description="N6-butyryllysine; alternate" evidence="3">
    <location>
        <position position="80"/>
    </location>
</feature>
<feature type="modified residue" description="N6-glutaryllysine; alternate" evidence="3">
    <location>
        <position position="80"/>
    </location>
</feature>
<feature type="modified residue" description="N6-propionyllysine; alternate" evidence="3">
    <location>
        <position position="80"/>
    </location>
</feature>
<feature type="modified residue" description="N6-succinyllysine; alternate" evidence="4">
    <location>
        <position position="80"/>
    </location>
</feature>
<feature type="modified residue" description="Phosphothreonine" evidence="4">
    <location>
        <position position="81"/>
    </location>
</feature>
<feature type="modified residue" description="Phosphotyrosine" evidence="3">
    <location>
        <position position="89"/>
    </location>
</feature>
<feature type="modified residue" description="N6-(2-hydroxyisobutyryl)lysine; alternate" evidence="3">
    <location>
        <position position="92"/>
    </location>
</feature>
<feature type="modified residue" description="N6-acetyllysine; alternate" evidence="3">
    <location>
        <position position="92"/>
    </location>
</feature>
<feature type="modified residue" description="N6-butyryllysine; alternate" evidence="3">
    <location>
        <position position="92"/>
    </location>
</feature>
<feature type="modified residue" description="N6-glutaryllysine; alternate" evidence="3">
    <location>
        <position position="92"/>
    </location>
</feature>
<feature type="modified residue" description="N6-lactoyllysine; alternate" evidence="3">
    <location>
        <position position="92"/>
    </location>
</feature>
<feature type="modified residue" description="N6-propionyllysine; alternate" evidence="3">
    <location>
        <position position="92"/>
    </location>
</feature>
<feature type="modified residue" description="N6-succinyllysine; alternate" evidence="3">
    <location>
        <position position="92"/>
    </location>
</feature>
<feature type="cross-link" description="Glycyl lysine isopeptide (Lys-Gly) (interchain with G-Cter in SUMO2); alternate" evidence="3">
    <location>
        <position position="13"/>
    </location>
</feature>
<feature type="cross-link" description="Glycyl lysine isopeptide (Lys-Gly) (interchain with G-Cter in SUMO2); alternate" evidence="3">
    <location>
        <position position="21"/>
    </location>
</feature>
<feature type="cross-link" description="Glycyl lysine isopeptide (Lys-Gly) (interchain with G-Cter in SUMO2); alternate" evidence="3">
    <location>
        <position position="32"/>
    </location>
</feature>
<feature type="cross-link" description="Glycyl lysine isopeptide (Lys-Gly) (interchain with G-Cter in UFM1); alternate" evidence="3">
    <location>
        <position position="32"/>
    </location>
</feature>
<feature type="cross-link" description="Glycyl lysine isopeptide (Lys-Gly) (interchain with G-Cter in SUMO2); alternate" evidence="3">
    <location>
        <position position="60"/>
    </location>
</feature>
<feature type="cross-link" description="Glycyl lysine isopeptide (Lys-Gly) (interchain with G-Cter in SUMO2); alternate" evidence="3">
    <location>
        <position position="80"/>
    </location>
</feature>
<feature type="cross-link" description="Glycyl lysine isopeptide (Lys-Gly) (interchain with G-Cter in SUMO2); alternate" evidence="3">
    <location>
        <position position="92"/>
    </location>
</feature>
<feature type="cross-link" description="Glycyl lysine isopeptide (Lys-Gly) (interchain with G-Cter in ubiquitin); alternate" evidence="3">
    <location>
        <position position="92"/>
    </location>
</feature>
<dbReference type="EMBL" id="CR858191">
    <property type="protein sequence ID" value="CAH90430.1"/>
    <property type="molecule type" value="mRNA"/>
</dbReference>
<dbReference type="RefSeq" id="NP_001128961.1">
    <property type="nucleotide sequence ID" value="NM_001135489.1"/>
</dbReference>
<dbReference type="RefSeq" id="XP_002816560.3">
    <property type="nucleotide sequence ID" value="XM_002816514.3"/>
</dbReference>
<dbReference type="RefSeq" id="XP_002823024.3">
    <property type="nucleotide sequence ID" value="XM_002822978.3"/>
</dbReference>
<dbReference type="RefSeq" id="XP_002832997.1">
    <property type="nucleotide sequence ID" value="XM_002832951.3"/>
</dbReference>
<dbReference type="RefSeq" id="XP_003775634.1">
    <property type="nucleotide sequence ID" value="XM_003775586.2"/>
</dbReference>
<dbReference type="RefSeq" id="XP_009239774.1">
    <property type="nucleotide sequence ID" value="XM_009241499.1"/>
</dbReference>
<dbReference type="RefSeq" id="XP_009243271.1">
    <property type="nucleotide sequence ID" value="XM_009244996.4"/>
</dbReference>
<dbReference type="RefSeq" id="XP_024103860.1">
    <property type="nucleotide sequence ID" value="XM_024248092.3"/>
</dbReference>
<dbReference type="RefSeq" id="XP_054382861.1">
    <property type="nucleotide sequence ID" value="XM_054526886.2"/>
</dbReference>
<dbReference type="RefSeq" id="XP_054384486.1">
    <property type="nucleotide sequence ID" value="XM_054528511.2"/>
</dbReference>
<dbReference type="RefSeq" id="XP_054384490.1">
    <property type="nucleotide sequence ID" value="XM_054528515.2"/>
</dbReference>
<dbReference type="RefSeq" id="XP_054384493.1">
    <property type="nucleotide sequence ID" value="XM_054528518.2"/>
</dbReference>
<dbReference type="RefSeq" id="XP_054413290.2">
    <property type="nucleotide sequence ID" value="XM_054557315.2"/>
</dbReference>
<dbReference type="RefSeq" id="XP_054414527.1">
    <property type="nucleotide sequence ID" value="XM_054558552.2"/>
</dbReference>
<dbReference type="RefSeq" id="XP_054414528.1">
    <property type="nucleotide sequence ID" value="XM_054558553.2"/>
</dbReference>
<dbReference type="RefSeq" id="XP_054414529.1">
    <property type="nucleotide sequence ID" value="XM_054558554.2"/>
</dbReference>
<dbReference type="RefSeq" id="XP_054414530.1">
    <property type="nucleotide sequence ID" value="XM_054558555.2"/>
</dbReference>
<dbReference type="RefSeq" id="XP_054414531.1">
    <property type="nucleotide sequence ID" value="XM_054558556.2"/>
</dbReference>
<dbReference type="RefSeq" id="XP_054414532.1">
    <property type="nucleotide sequence ID" value="XM_054558557.2"/>
</dbReference>
<dbReference type="RefSeq" id="XP_054414533.1">
    <property type="nucleotide sequence ID" value="XM_054558558.2"/>
</dbReference>
<dbReference type="RefSeq" id="XP_063581214.1">
    <property type="nucleotide sequence ID" value="XM_063725144.1"/>
</dbReference>
<dbReference type="RefSeq" id="XP_063583899.1">
    <property type="nucleotide sequence ID" value="XM_063727829.1"/>
</dbReference>
<dbReference type="SMR" id="Q5RCS7"/>
<dbReference type="FunCoup" id="Q5RCS7">
    <property type="interactions" value="1282"/>
</dbReference>
<dbReference type="STRING" id="9601.ENSPPYP00000001075"/>
<dbReference type="Ensembl" id="ENSPPYT00000001111.2">
    <property type="protein sequence ID" value="ENSPPYP00000001075.1"/>
    <property type="gene ID" value="ENSPPYG00000000922.2"/>
</dbReference>
<dbReference type="Ensembl" id="ENSPPYT00000005128.2">
    <property type="protein sequence ID" value="ENSPPYP00000004934.1"/>
    <property type="gene ID" value="ENSPPYG00000004321.2"/>
</dbReference>
<dbReference type="Ensembl" id="ENSPPYT00000040984.1">
    <property type="protein sequence ID" value="ENSPPYP00000031715.1"/>
    <property type="gene ID" value="ENSPPYG00000035694.1"/>
</dbReference>
<dbReference type="Ensembl" id="ENSPPYT00000043064.1">
    <property type="protein sequence ID" value="ENSPPYP00000043520.1"/>
    <property type="gene ID" value="ENSPPYG00000030903.1"/>
</dbReference>
<dbReference type="Ensembl" id="ENSPPYT00000049402.1">
    <property type="protein sequence ID" value="ENSPPYP00000045746.1"/>
    <property type="gene ID" value="ENSPPYG00000034495.1"/>
</dbReference>
<dbReference type="Ensembl" id="ENSPPYT00000049460.1">
    <property type="protein sequence ID" value="ENSPPYP00000039730.1"/>
    <property type="gene ID" value="ENSPPYG00000039059.1"/>
</dbReference>
<dbReference type="Ensembl" id="ENSPPYT00000051269.1">
    <property type="protein sequence ID" value="ENSPPYP00000042535.1"/>
    <property type="gene ID" value="ENSPPYG00000035020.1"/>
</dbReference>
<dbReference type="Ensembl" id="ENSPPYT00000053217.1">
    <property type="protein sequence ID" value="ENSPPYP00000038393.1"/>
    <property type="gene ID" value="ENSPPYG00000037998.1"/>
</dbReference>
<dbReference type="Ensembl" id="ENSPPYT00000056236.1">
    <property type="protein sequence ID" value="ENSPPYP00000031900.1"/>
    <property type="gene ID" value="ENSPPYG00000030792.1"/>
</dbReference>
<dbReference type="Ensembl" id="ENSPPYT00000060604.1">
    <property type="protein sequence ID" value="ENSPPYP00000029984.1"/>
    <property type="gene ID" value="ENSPPYG00000037339.1"/>
</dbReference>
<dbReference type="Ensembl" id="ENSPPYT00000060682.1">
    <property type="protein sequence ID" value="ENSPPYP00000028865.1"/>
    <property type="gene ID" value="ENSPPYG00000036722.1"/>
</dbReference>
<dbReference type="Ensembl" id="ENSPPYT00000061132.1">
    <property type="protein sequence ID" value="ENSPPYP00000041242.1"/>
    <property type="gene ID" value="ENSPPYG00000034310.1"/>
</dbReference>
<dbReference type="GeneID" id="100190801"/>
<dbReference type="GeneID" id="100431299"/>
<dbReference type="GeneID" id="100440073"/>
<dbReference type="GeneID" id="100450287"/>
<dbReference type="GeneID" id="100935714"/>
<dbReference type="GeneID" id="112133748"/>
<dbReference type="GeneID" id="112133752"/>
<dbReference type="GeneID" id="129049386"/>
<dbReference type="KEGG" id="pon:100190801"/>
<dbReference type="KEGG" id="pon:100450287"/>
<dbReference type="eggNOG" id="KOG3467">
    <property type="taxonomic scope" value="Eukaryota"/>
</dbReference>
<dbReference type="GeneTree" id="ENSGT01060000248528"/>
<dbReference type="HOGENOM" id="CLU_109117_2_3_1"/>
<dbReference type="InParanoid" id="Q5RCS7"/>
<dbReference type="OMA" id="XRISAMI"/>
<dbReference type="OrthoDB" id="9530756at2759"/>
<dbReference type="Proteomes" id="UP000001595">
    <property type="component" value="Chromosome 1"/>
</dbReference>
<dbReference type="Proteomes" id="UP000001595">
    <property type="component" value="Chromosome 12"/>
</dbReference>
<dbReference type="Proteomes" id="UP000001595">
    <property type="component" value="Chromosome 6"/>
</dbReference>
<dbReference type="GO" id="GO:0000786">
    <property type="term" value="C:nucleosome"/>
    <property type="evidence" value="ECO:0007669"/>
    <property type="project" value="UniProtKB-KW"/>
</dbReference>
<dbReference type="GO" id="GO:0005634">
    <property type="term" value="C:nucleus"/>
    <property type="evidence" value="ECO:0007669"/>
    <property type="project" value="UniProtKB-SubCell"/>
</dbReference>
<dbReference type="GO" id="GO:0003677">
    <property type="term" value="F:DNA binding"/>
    <property type="evidence" value="ECO:0007669"/>
    <property type="project" value="UniProtKB-KW"/>
</dbReference>
<dbReference type="GO" id="GO:0046982">
    <property type="term" value="F:protein heterodimerization activity"/>
    <property type="evidence" value="ECO:0007669"/>
    <property type="project" value="InterPro"/>
</dbReference>
<dbReference type="GO" id="GO:0030527">
    <property type="term" value="F:structural constituent of chromatin"/>
    <property type="evidence" value="ECO:0007669"/>
    <property type="project" value="InterPro"/>
</dbReference>
<dbReference type="CDD" id="cd22912">
    <property type="entry name" value="HFD_H4"/>
    <property type="match status" value="1"/>
</dbReference>
<dbReference type="FunFam" id="1.10.20.10:FF:000002">
    <property type="entry name" value="Histone H4"/>
    <property type="match status" value="1"/>
</dbReference>
<dbReference type="Gene3D" id="1.10.20.10">
    <property type="entry name" value="Histone, subunit A"/>
    <property type="match status" value="1"/>
</dbReference>
<dbReference type="InterPro" id="IPR035425">
    <property type="entry name" value="CENP-T/H4_C"/>
</dbReference>
<dbReference type="InterPro" id="IPR009072">
    <property type="entry name" value="Histone-fold"/>
</dbReference>
<dbReference type="InterPro" id="IPR001951">
    <property type="entry name" value="Histone_H4"/>
</dbReference>
<dbReference type="InterPro" id="IPR019809">
    <property type="entry name" value="Histone_H4_CS"/>
</dbReference>
<dbReference type="InterPro" id="IPR004823">
    <property type="entry name" value="TAF_TATA-bd_Histone-like_dom"/>
</dbReference>
<dbReference type="PANTHER" id="PTHR10484">
    <property type="entry name" value="HISTONE H4"/>
    <property type="match status" value="1"/>
</dbReference>
<dbReference type="Pfam" id="PF15511">
    <property type="entry name" value="CENP-T_C"/>
    <property type="match status" value="1"/>
</dbReference>
<dbReference type="PRINTS" id="PR00623">
    <property type="entry name" value="HISTONEH4"/>
</dbReference>
<dbReference type="SMART" id="SM00417">
    <property type="entry name" value="H4"/>
    <property type="match status" value="1"/>
</dbReference>
<dbReference type="SMART" id="SM00803">
    <property type="entry name" value="TAF"/>
    <property type="match status" value="1"/>
</dbReference>
<dbReference type="SUPFAM" id="SSF47113">
    <property type="entry name" value="Histone-fold"/>
    <property type="match status" value="1"/>
</dbReference>
<dbReference type="PROSITE" id="PS00047">
    <property type="entry name" value="HISTONE_H4"/>
    <property type="match status" value="1"/>
</dbReference>
<comment type="function">
    <text evidence="1">Core component of nucleosome. Nucleosomes wrap and compact DNA into chromatin, limiting DNA accessibility to the cellular machineries which require DNA as a template. Histones thereby play a central role in transcription regulation, DNA repair, DNA replication and chromosomal stability. DNA accessibility is regulated via a complex set of post-translational modifications of histones, also called histone code, and nucleosome remodeling (By similarity).</text>
</comment>
<comment type="subunit">
    <text evidence="3 4">The nucleosome is a histone octamer containing two molecules each of H2A, H2B, H3 and H4 assembled in one H3-H4 heterotetramer and two H2A-H2B heterodimers. The octamer wraps approximately 147 bp of DNA (By similarity). Found in a co-chaperone complex with DNJC9, MCM2 and histone H3.3-H4 dimers (By similarity). Within the complex, interacts with DNJC9 (via C-terminus); the interaction is direct (By similarity). Interacts with NASP; NASP is a histone chaperone that stabilizes and maintains a soluble pool of Histone H3-H4 dimers (By similarity).</text>
</comment>
<comment type="subcellular location">
    <subcellularLocation>
        <location evidence="4">Nucleus</location>
    </subcellularLocation>
    <subcellularLocation>
        <location evidence="1">Chromosome</location>
    </subcellularLocation>
    <text evidence="4">Localized to the nucleus when acetylated in step 11 spermatids.</text>
</comment>
<comment type="PTM">
    <text evidence="3 4">Acetylation at Lys-6 (H4K5ac), Lys-9 (H4K8ac), Lys-13 (H4K12ac) and Lys-17 (H4K16ac) occurs in coding regions of the genome but not in heterochromatin. Acetylated as part of spermatogenesis progression prior to histone-to-protamine exchange (By similarity).</text>
</comment>
<comment type="PTM">
    <text evidence="3">Citrullination at Arg-4 (H4R3ci) by PADI4 impairs methylation.</text>
</comment>
<comment type="PTM">
    <text evidence="3">Monomethylation and asymmetric dimethylation at Arg-4 (H4R3me1 and H4R3me2a, respectively) by PRMT1 favors acetylation at Lys-9 (H4K8ac) and Lys-13 (H4K12ac). Demethylation is performed by JMJD6. Symmetric dimethylation on Arg-4 (H4R3me2s) by the PRDM1/PRMT5 complex may play a crucial role in the germ-cell lineage (By similarity).</text>
</comment>
<comment type="PTM">
    <text evidence="3">Monomethylated, dimethylated or trimethylated at Lys-21 (H4K20me1, H4K20me2, H4K20me3). Monomethylation is performed by KMT5A/SET8. Trimethylation is performed by KMT5B and KMT5C and induces gene silencing. Monomethylated at Lys-13 (H4K12me1) by N6AMT1; H4K12me1 modification is present at the promoters of numerous genes encoding cell cycle regulators.</text>
</comment>
<comment type="PTM">
    <text evidence="3">Acetyl-methylated at Lys-6 and Lys-13 (H4K5acme and H4K12acme, respectively), acetyl-methylation is an epigenetic mark of active chromatin associated with increased transcriptional initiation. Acetyl-methylation is formed by acetylation by EP300/p300 of lysine residues that are already monomethylated on the same side chain. H4K5acme and H4K12acme marks specifically bind BRD2.</text>
</comment>
<comment type="PTM">
    <text evidence="3">Phosphorylated by PAK2 at Ser-48 (H4S47ph). This phosphorylation increases the association of H3.3-H4 with the histone chaperone HIRA, thus promoting nucleosome assembly of H3.3-H4 and inhibiting nucleosome assembly of H3.1-H4 (By similarity).</text>
</comment>
<comment type="PTM">
    <text evidence="3 4">Ubiquitinated by the CUL4-DDB-RBX1 complex in response to ultraviolet irradiation. This may weaken the interaction between histones and DNA and facilitate DNA accessibility to repair proteins. Monoubiquitinated at Lys-92 of histone H4 (H4K91ub1) in response to DNA damage. The exact role of H4K91ub1 in DNA damage response is still unclear but it may function as a licensing signal for additional histone H4 post-translational modifications such as H4 Lys-21 methylation (H4K20me) (By similarity). Ubiquitinated; by PHF7 (By similarity).</text>
</comment>
<comment type="PTM">
    <text evidence="3">Sumoylated, which is associated with transcriptional repression.</text>
</comment>
<comment type="PTM">
    <text evidence="3">Crotonylation (Kcr) is specifically present in male germ cells and marks testis-specific genes in post-meiotic cells, including X-linked genes that escape sex chromosome inactivation in haploid cells. Crotonylation marks active promoters and enhancers and confers resistance to transcriptional repressors. It is also associated with post-meiotically activated genes on autosomes (By similarity).</text>
</comment>
<comment type="PTM">
    <text evidence="4">Butyrylation of histones marks active promoters and competes with histone acetylation.</text>
</comment>
<comment type="PTM">
    <text evidence="3">Glutarylation at Lys-92 (H4K91glu) destabilizes nucleosomes by promoting dissociation of the H2A-H2B dimers from nucleosomes.</text>
</comment>
<comment type="PTM">
    <text evidence="3">Ufmylated; monofmylated by UFL1 at Lys-32 (H4K31Ufm1) in response to DNA damage.</text>
</comment>
<comment type="PTM">
    <text evidence="3">Lactylated in macrophages by EP300/P300 by using lactoyl-CoA directly derived from endogenous or exogenous lactate, leading to stimulates gene transcription. Delactylated by SIRT3 at Lys-17 (H4K16la).</text>
</comment>
<comment type="similarity">
    <text evidence="6">Belongs to the histone H4 family.</text>
</comment>
<evidence type="ECO:0000250" key="1"/>
<evidence type="ECO:0000250" key="2">
    <source>
        <dbReference type="UniProtKB" id="P62803"/>
    </source>
</evidence>
<evidence type="ECO:0000250" key="3">
    <source>
        <dbReference type="UniProtKB" id="P62805"/>
    </source>
</evidence>
<evidence type="ECO:0000250" key="4">
    <source>
        <dbReference type="UniProtKB" id="P62806"/>
    </source>
</evidence>
<evidence type="ECO:0000256" key="5">
    <source>
        <dbReference type="SAM" id="MobiDB-lite"/>
    </source>
</evidence>
<evidence type="ECO:0000305" key="6"/>
<sequence>MSGRGKGGKGLGKGGAKRHRKVLRDNIQGITKPAIRRLARRGGVKRISGLIYEETRGVLKVFLENVIRDAVTYTEHAKRKTVTAMDVVYALKRQGRTLYGFGG</sequence>
<keyword id="KW-0007">Acetylation</keyword>
<keyword id="KW-0158">Chromosome</keyword>
<keyword id="KW-0164">Citrullination</keyword>
<keyword id="KW-0238">DNA-binding</keyword>
<keyword id="KW-0379">Hydroxylation</keyword>
<keyword id="KW-1017">Isopeptide bond</keyword>
<keyword id="KW-0488">Methylation</keyword>
<keyword id="KW-0544">Nucleosome core</keyword>
<keyword id="KW-0539">Nucleus</keyword>
<keyword id="KW-0597">Phosphoprotein</keyword>
<keyword id="KW-1185">Reference proteome</keyword>
<keyword id="KW-0832">Ubl conjugation</keyword>
<organism>
    <name type="scientific">Pongo abelii</name>
    <name type="common">Sumatran orangutan</name>
    <name type="synonym">Pongo pygmaeus abelii</name>
    <dbReference type="NCBI Taxonomy" id="9601"/>
    <lineage>
        <taxon>Eukaryota</taxon>
        <taxon>Metazoa</taxon>
        <taxon>Chordata</taxon>
        <taxon>Craniata</taxon>
        <taxon>Vertebrata</taxon>
        <taxon>Euteleostomi</taxon>
        <taxon>Mammalia</taxon>
        <taxon>Eutheria</taxon>
        <taxon>Euarchontoglires</taxon>
        <taxon>Primates</taxon>
        <taxon>Haplorrhini</taxon>
        <taxon>Catarrhini</taxon>
        <taxon>Hominidae</taxon>
        <taxon>Pongo</taxon>
    </lineage>
</organism>